<feature type="chain" id="PRO_0000190355" description="Recombination protein RecR">
    <location>
        <begin position="1"/>
        <end position="206"/>
    </location>
</feature>
<feature type="domain" description="Toprim" evidence="1">
    <location>
        <begin position="83"/>
        <end position="178"/>
    </location>
</feature>
<feature type="zinc finger region" description="C4-type" evidence="1">
    <location>
        <begin position="60"/>
        <end position="75"/>
    </location>
</feature>
<sequence>MMSHKKQDAFQGLIDALKVLPNVGPKSAQRIAYHLLQHKRKEAEKLVDALQTALKQVYHCAMCNTFCEGGLCDICADETRDGRRLMVVHMPADVSNMEAANCHDGLYFVLMGQINTALGMDVSAIALDRLAQRLGGGEVEEIIIATAFTAEGNATAYVLSEFFKNLPYKVSRLSQGIPLGGELEYVDAGTLAQAVYERRLIKEGGA</sequence>
<reference key="1">
    <citation type="journal article" date="2000" name="Science">
        <title>Complete genome sequence of Neisseria meningitidis serogroup B strain MC58.</title>
        <authorList>
            <person name="Tettelin H."/>
            <person name="Saunders N.J."/>
            <person name="Heidelberg J.F."/>
            <person name="Jeffries A.C."/>
            <person name="Nelson K.E."/>
            <person name="Eisen J.A."/>
            <person name="Ketchum K.A."/>
            <person name="Hood D.W."/>
            <person name="Peden J.F."/>
            <person name="Dodson R.J."/>
            <person name="Nelson W.C."/>
            <person name="Gwinn M.L."/>
            <person name="DeBoy R.T."/>
            <person name="Peterson J.D."/>
            <person name="Hickey E.K."/>
            <person name="Haft D.H."/>
            <person name="Salzberg S.L."/>
            <person name="White O."/>
            <person name="Fleischmann R.D."/>
            <person name="Dougherty B.A."/>
            <person name="Mason T.M."/>
            <person name="Ciecko A."/>
            <person name="Parksey D.S."/>
            <person name="Blair E."/>
            <person name="Cittone H."/>
            <person name="Clark E.B."/>
            <person name="Cotton M.D."/>
            <person name="Utterback T.R."/>
            <person name="Khouri H.M."/>
            <person name="Qin H."/>
            <person name="Vamathevan J.J."/>
            <person name="Gill J."/>
            <person name="Scarlato V."/>
            <person name="Masignani V."/>
            <person name="Pizza M."/>
            <person name="Grandi G."/>
            <person name="Sun L."/>
            <person name="Smith H.O."/>
            <person name="Fraser C.M."/>
            <person name="Moxon E.R."/>
            <person name="Rappuoli R."/>
            <person name="Venter J.C."/>
        </authorList>
    </citation>
    <scope>NUCLEOTIDE SEQUENCE [LARGE SCALE GENOMIC DNA]</scope>
    <source>
        <strain>ATCC BAA-335 / MC58</strain>
    </source>
</reference>
<protein>
    <recommendedName>
        <fullName evidence="1">Recombination protein RecR</fullName>
    </recommendedName>
</protein>
<gene>
    <name evidence="1" type="primary">recR</name>
    <name type="ordered locus">NMB1237</name>
</gene>
<keyword id="KW-0227">DNA damage</keyword>
<keyword id="KW-0233">DNA recombination</keyword>
<keyword id="KW-0234">DNA repair</keyword>
<keyword id="KW-0479">Metal-binding</keyword>
<keyword id="KW-1185">Reference proteome</keyword>
<keyword id="KW-0862">Zinc</keyword>
<keyword id="KW-0863">Zinc-finger</keyword>
<accession>Q9JZ92</accession>
<comment type="function">
    <text evidence="1">May play a role in DNA repair. It seems to be involved in an RecBC-independent recombinational process of DNA repair. It may act with RecF and RecO.</text>
</comment>
<comment type="similarity">
    <text evidence="1">Belongs to the RecR family.</text>
</comment>
<evidence type="ECO:0000255" key="1">
    <source>
        <dbReference type="HAMAP-Rule" id="MF_00017"/>
    </source>
</evidence>
<name>RECR_NEIMB</name>
<organism>
    <name type="scientific">Neisseria meningitidis serogroup B (strain ATCC BAA-335 / MC58)</name>
    <dbReference type="NCBI Taxonomy" id="122586"/>
    <lineage>
        <taxon>Bacteria</taxon>
        <taxon>Pseudomonadati</taxon>
        <taxon>Pseudomonadota</taxon>
        <taxon>Betaproteobacteria</taxon>
        <taxon>Neisseriales</taxon>
        <taxon>Neisseriaceae</taxon>
        <taxon>Neisseria</taxon>
    </lineage>
</organism>
<proteinExistence type="inferred from homology"/>
<dbReference type="EMBL" id="AE002098">
    <property type="protein sequence ID" value="AAF41618.1"/>
    <property type="molecule type" value="Genomic_DNA"/>
</dbReference>
<dbReference type="PIR" id="B81105">
    <property type="entry name" value="B81105"/>
</dbReference>
<dbReference type="RefSeq" id="NP_274261.1">
    <property type="nucleotide sequence ID" value="NC_003112.2"/>
</dbReference>
<dbReference type="SMR" id="Q9JZ92"/>
<dbReference type="FunCoup" id="Q9JZ92">
    <property type="interactions" value="231"/>
</dbReference>
<dbReference type="STRING" id="122586.NMB1237"/>
<dbReference type="PaxDb" id="122586-NMB1237"/>
<dbReference type="KEGG" id="nme:NMB1237"/>
<dbReference type="PATRIC" id="fig|122586.8.peg.1548"/>
<dbReference type="HOGENOM" id="CLU_060739_1_2_4"/>
<dbReference type="InParanoid" id="Q9JZ92"/>
<dbReference type="OrthoDB" id="9802672at2"/>
<dbReference type="Proteomes" id="UP000000425">
    <property type="component" value="Chromosome"/>
</dbReference>
<dbReference type="GO" id="GO:0003677">
    <property type="term" value="F:DNA binding"/>
    <property type="evidence" value="ECO:0007669"/>
    <property type="project" value="UniProtKB-UniRule"/>
</dbReference>
<dbReference type="GO" id="GO:0008270">
    <property type="term" value="F:zinc ion binding"/>
    <property type="evidence" value="ECO:0007669"/>
    <property type="project" value="UniProtKB-KW"/>
</dbReference>
<dbReference type="GO" id="GO:0006302">
    <property type="term" value="P:double-strand break repair"/>
    <property type="evidence" value="ECO:0000318"/>
    <property type="project" value="GO_Central"/>
</dbReference>
<dbReference type="GO" id="GO:0000725">
    <property type="term" value="P:recombinational repair"/>
    <property type="evidence" value="ECO:0000318"/>
    <property type="project" value="GO_Central"/>
</dbReference>
<dbReference type="CDD" id="cd01025">
    <property type="entry name" value="TOPRIM_recR"/>
    <property type="match status" value="1"/>
</dbReference>
<dbReference type="Gene3D" id="3.40.1360.10">
    <property type="match status" value="1"/>
</dbReference>
<dbReference type="Gene3D" id="1.10.8.420">
    <property type="entry name" value="RecR Domain 1"/>
    <property type="match status" value="1"/>
</dbReference>
<dbReference type="HAMAP" id="MF_00017">
    <property type="entry name" value="RecR"/>
    <property type="match status" value="1"/>
</dbReference>
<dbReference type="InterPro" id="IPR000093">
    <property type="entry name" value="DNA_Rcmb_RecR"/>
</dbReference>
<dbReference type="InterPro" id="IPR023627">
    <property type="entry name" value="Rcmb_RecR"/>
</dbReference>
<dbReference type="InterPro" id="IPR015967">
    <property type="entry name" value="Rcmb_RecR_Znf"/>
</dbReference>
<dbReference type="InterPro" id="IPR006171">
    <property type="entry name" value="TOPRIM_dom"/>
</dbReference>
<dbReference type="InterPro" id="IPR034137">
    <property type="entry name" value="TOPRIM_RecR"/>
</dbReference>
<dbReference type="NCBIfam" id="TIGR00615">
    <property type="entry name" value="recR"/>
    <property type="match status" value="1"/>
</dbReference>
<dbReference type="PANTHER" id="PTHR30446">
    <property type="entry name" value="RECOMBINATION PROTEIN RECR"/>
    <property type="match status" value="1"/>
</dbReference>
<dbReference type="PANTHER" id="PTHR30446:SF0">
    <property type="entry name" value="RECOMBINATION PROTEIN RECR"/>
    <property type="match status" value="1"/>
</dbReference>
<dbReference type="Pfam" id="PF21175">
    <property type="entry name" value="RecR_C"/>
    <property type="match status" value="1"/>
</dbReference>
<dbReference type="Pfam" id="PF21176">
    <property type="entry name" value="RecR_HhH"/>
    <property type="match status" value="1"/>
</dbReference>
<dbReference type="Pfam" id="PF02132">
    <property type="entry name" value="RecR_ZnF"/>
    <property type="match status" value="1"/>
</dbReference>
<dbReference type="Pfam" id="PF13662">
    <property type="entry name" value="Toprim_4"/>
    <property type="match status" value="1"/>
</dbReference>
<dbReference type="SUPFAM" id="SSF111304">
    <property type="entry name" value="Recombination protein RecR"/>
    <property type="match status" value="1"/>
</dbReference>
<dbReference type="PROSITE" id="PS01300">
    <property type="entry name" value="RECR"/>
    <property type="match status" value="1"/>
</dbReference>
<dbReference type="PROSITE" id="PS50880">
    <property type="entry name" value="TOPRIM"/>
    <property type="match status" value="1"/>
</dbReference>